<feature type="signal peptide" evidence="1">
    <location>
        <begin position="1"/>
        <end position="26"/>
    </location>
</feature>
<feature type="chain" id="PRO_0000021025" description="CUB and sushi domain-containing protein 1">
    <location>
        <begin position="27"/>
        <end position="3564"/>
    </location>
</feature>
<feature type="topological domain" description="Extracellular" evidence="1">
    <location>
        <begin position="27"/>
        <end position="3487"/>
    </location>
</feature>
<feature type="transmembrane region" description="Helical" evidence="1">
    <location>
        <begin position="3488"/>
        <end position="3508"/>
    </location>
</feature>
<feature type="topological domain" description="Cytoplasmic" evidence="1">
    <location>
        <begin position="3509"/>
        <end position="3564"/>
    </location>
</feature>
<feature type="domain" description="CUB 1" evidence="2">
    <location>
        <begin position="32"/>
        <end position="140"/>
    </location>
</feature>
<feature type="domain" description="Sushi 1" evidence="3">
    <location>
        <begin position="143"/>
        <end position="204"/>
    </location>
</feature>
<feature type="domain" description="CUB 2" evidence="2">
    <location>
        <begin position="208"/>
        <end position="312"/>
    </location>
</feature>
<feature type="domain" description="Sushi 2" evidence="3">
    <location>
        <begin position="347"/>
        <end position="408"/>
    </location>
</feature>
<feature type="domain" description="CUB 3" evidence="2">
    <location>
        <begin position="411"/>
        <end position="522"/>
    </location>
</feature>
<feature type="domain" description="Sushi 3" evidence="3">
    <location>
        <begin position="525"/>
        <end position="582"/>
    </location>
</feature>
<feature type="domain" description="CUB 4" evidence="2">
    <location>
        <begin position="584"/>
        <end position="692"/>
    </location>
</feature>
<feature type="domain" description="Sushi 4" evidence="3">
    <location>
        <begin position="695"/>
        <end position="756"/>
    </location>
</feature>
<feature type="domain" description="CUB 5" evidence="2">
    <location>
        <begin position="758"/>
        <end position="866"/>
    </location>
</feature>
<feature type="domain" description="Sushi 5" evidence="3">
    <location>
        <begin position="871"/>
        <end position="928"/>
    </location>
</feature>
<feature type="domain" description="CUB 6" evidence="2">
    <location>
        <begin position="930"/>
        <end position="1040"/>
    </location>
</feature>
<feature type="domain" description="Sushi 6" evidence="3">
    <location>
        <begin position="1043"/>
        <end position="1102"/>
    </location>
</feature>
<feature type="domain" description="CUB 7" evidence="2">
    <location>
        <begin position="1104"/>
        <end position="1212"/>
    </location>
</feature>
<feature type="domain" description="Sushi 7" evidence="3">
    <location>
        <begin position="1215"/>
        <end position="1275"/>
    </location>
</feature>
<feature type="domain" description="CUB 8" evidence="2">
    <location>
        <begin position="1277"/>
        <end position="1386"/>
    </location>
</feature>
<feature type="domain" description="Sushi 8" evidence="3">
    <location>
        <begin position="1389"/>
        <end position="1449"/>
    </location>
</feature>
<feature type="domain" description="CUB 9" evidence="2">
    <location>
        <begin position="1451"/>
        <end position="1559"/>
    </location>
</feature>
<feature type="domain" description="Sushi 9" evidence="3">
    <location>
        <begin position="1562"/>
        <end position="1623"/>
    </location>
</feature>
<feature type="domain" description="CUB 10" evidence="2">
    <location>
        <begin position="1625"/>
        <end position="1733"/>
    </location>
</feature>
<feature type="domain" description="Sushi 10" evidence="3">
    <location>
        <begin position="1739"/>
        <end position="1800"/>
    </location>
</feature>
<feature type="domain" description="CUB 11" evidence="2">
    <location>
        <begin position="1802"/>
        <end position="1910"/>
    </location>
</feature>
<feature type="domain" description="Sushi 11" evidence="3">
    <location>
        <begin position="1913"/>
        <end position="1972"/>
    </location>
</feature>
<feature type="domain" description="CUB 12" evidence="2">
    <location>
        <begin position="1974"/>
        <end position="2082"/>
    </location>
</feature>
<feature type="domain" description="Sushi 12" evidence="3">
    <location>
        <begin position="2085"/>
        <end position="2144"/>
    </location>
</feature>
<feature type="domain" description="CUB 13" evidence="2">
    <location>
        <begin position="2146"/>
        <end position="2257"/>
    </location>
</feature>
<feature type="domain" description="Sushi 13" evidence="3">
    <location>
        <begin position="2256"/>
        <end position="2317"/>
    </location>
</feature>
<feature type="domain" description="CUB 14" evidence="2">
    <location>
        <begin position="2319"/>
        <end position="2430"/>
    </location>
</feature>
<feature type="domain" description="Sushi 14" evidence="3">
    <location>
        <begin position="2430"/>
        <end position="2492"/>
    </location>
</feature>
<feature type="domain" description="Sushi 15" evidence="3">
    <location>
        <begin position="2493"/>
        <end position="2554"/>
    </location>
</feature>
<feature type="domain" description="Sushi 16" evidence="3">
    <location>
        <begin position="2555"/>
        <end position="2619"/>
    </location>
</feature>
<feature type="domain" description="Sushi 17" evidence="3">
    <location>
        <begin position="2620"/>
        <end position="2677"/>
    </location>
</feature>
<feature type="domain" description="Sushi 18" evidence="3">
    <location>
        <begin position="2678"/>
        <end position="2735"/>
    </location>
</feature>
<feature type="domain" description="Sushi 19" evidence="3">
    <location>
        <begin position="2736"/>
        <end position="2793"/>
    </location>
</feature>
<feature type="domain" description="Sushi 20" evidence="3">
    <location>
        <begin position="2794"/>
        <end position="2856"/>
    </location>
</feature>
<feature type="domain" description="Sushi 21" evidence="3">
    <location>
        <begin position="2857"/>
        <end position="2914"/>
    </location>
</feature>
<feature type="domain" description="Sushi 22" evidence="3">
    <location>
        <begin position="2918"/>
        <end position="2975"/>
    </location>
</feature>
<feature type="domain" description="Sushi 23" evidence="3">
    <location>
        <begin position="2976"/>
        <end position="3034"/>
    </location>
</feature>
<feature type="domain" description="Sushi 24" evidence="3">
    <location>
        <begin position="3035"/>
        <end position="3094"/>
    </location>
</feature>
<feature type="domain" description="Sushi 25" evidence="3">
    <location>
        <begin position="3095"/>
        <end position="3152"/>
    </location>
</feature>
<feature type="domain" description="Sushi 26" evidence="3">
    <location>
        <begin position="3153"/>
        <end position="3210"/>
    </location>
</feature>
<feature type="domain" description="Sushi 27" evidence="3">
    <location>
        <begin position="3214"/>
        <end position="3272"/>
    </location>
</feature>
<feature type="domain" description="Sushi 28" evidence="3">
    <location>
        <begin position="3273"/>
        <end position="3332"/>
    </location>
</feature>
<feature type="glycosylation site" description="N-linked (GlcNAc...) asparagine" evidence="1">
    <location>
        <position position="40"/>
    </location>
</feature>
<feature type="glycosylation site" description="N-linked (GlcNAc...) asparagine" evidence="1">
    <location>
        <position position="57"/>
    </location>
</feature>
<feature type="glycosylation site" description="N-linked (GlcNAc...) asparagine" evidence="1">
    <location>
        <position position="587"/>
    </location>
</feature>
<feature type="glycosylation site" description="N-linked (GlcNAc...) asparagine" evidence="1">
    <location>
        <position position="686"/>
    </location>
</feature>
<feature type="glycosylation site" description="N-linked (GlcNAc...) asparagine" evidence="1">
    <location>
        <position position="955"/>
    </location>
</feature>
<feature type="glycosylation site" description="N-linked (GlcNAc...) asparagine" evidence="1">
    <location>
        <position position="1015"/>
    </location>
</feature>
<feature type="glycosylation site" description="N-linked (GlcNAc...) asparagine" evidence="1">
    <location>
        <position position="1034"/>
    </location>
</feature>
<feature type="glycosylation site" description="N-linked (GlcNAc...) asparagine" evidence="1">
    <location>
        <position position="1184"/>
    </location>
</feature>
<feature type="glycosylation site" description="N-linked (GlcNAc...) asparagine" evidence="1">
    <location>
        <position position="1197"/>
    </location>
</feature>
<feature type="glycosylation site" description="N-linked (GlcNAc...) asparagine" evidence="1">
    <location>
        <position position="1399"/>
    </location>
</feature>
<feature type="glycosylation site" description="N-linked (GlcNAc...) asparagine" evidence="1">
    <location>
        <position position="1454"/>
    </location>
</feature>
<feature type="glycosylation site" description="N-linked (GlcNAc...) asparagine" evidence="1">
    <location>
        <position position="1572"/>
    </location>
</feature>
<feature type="glycosylation site" description="N-linked (GlcNAc...) asparagine" evidence="1">
    <location>
        <position position="1644"/>
    </location>
</feature>
<feature type="glycosylation site" description="N-linked (GlcNAc...) asparagine" evidence="1">
    <location>
        <position position="1792"/>
    </location>
</feature>
<feature type="glycosylation site" description="N-linked (GlcNAc...) asparagine" evidence="1">
    <location>
        <position position="1805"/>
    </location>
</feature>
<feature type="glycosylation site" description="N-linked (GlcNAc...) asparagine" evidence="1">
    <location>
        <position position="1882"/>
    </location>
</feature>
<feature type="glycosylation site" description="N-linked (GlcNAc...) asparagine" evidence="1">
    <location>
        <position position="2018"/>
    </location>
</feature>
<feature type="glycosylation site" description="N-linked (GlcNAc...) asparagine" evidence="1">
    <location>
        <position position="2149"/>
    </location>
</feature>
<feature type="glycosylation site" description="N-linked (GlcNAc...) asparagine" evidence="1">
    <location>
        <position position="2154"/>
    </location>
</feature>
<feature type="glycosylation site" description="N-linked (GlcNAc...) asparagine" evidence="1">
    <location>
        <position position="2187"/>
    </location>
</feature>
<feature type="glycosylation site" description="N-linked (GlcNAc...) asparagine" evidence="1">
    <location>
        <position position="2358"/>
    </location>
</feature>
<feature type="glycosylation site" description="N-linked (GlcNAc...) asparagine" evidence="1">
    <location>
        <position position="2394"/>
    </location>
</feature>
<feature type="glycosylation site" description="N-linked (GlcNAc...) asparagine" evidence="1">
    <location>
        <position position="2400"/>
    </location>
</feature>
<feature type="glycosylation site" description="N-linked (GlcNAc...) asparagine" evidence="1">
    <location>
        <position position="2445"/>
    </location>
</feature>
<feature type="glycosylation site" description="N-linked (GlcNAc...) asparagine" evidence="1">
    <location>
        <position position="2470"/>
    </location>
</feature>
<feature type="glycosylation site" description="N-linked (GlcNAc...) asparagine" evidence="1">
    <location>
        <position position="2503"/>
    </location>
</feature>
<feature type="glycosylation site" description="N-linked (GlcNAc...) asparagine" evidence="1">
    <location>
        <position position="2605"/>
    </location>
</feature>
<feature type="glycosylation site" description="N-linked (GlcNAc...) asparagine" evidence="1">
    <location>
        <position position="2750"/>
    </location>
</feature>
<feature type="glycosylation site" description="N-linked (GlcNAc...) asparagine" evidence="1">
    <location>
        <position position="2761"/>
    </location>
</feature>
<feature type="glycosylation site" description="N-linked (GlcNAc...) asparagine" evidence="1">
    <location>
        <position position="2795"/>
    </location>
</feature>
<feature type="glycosylation site" description="N-linked (GlcNAc...) asparagine" evidence="1">
    <location>
        <position position="2894"/>
    </location>
</feature>
<feature type="glycosylation site" description="N-linked (GlcNAc...) asparagine" evidence="1">
    <location>
        <position position="2963"/>
    </location>
</feature>
<feature type="glycosylation site" description="N-linked (GlcNAc...) asparagine" evidence="1">
    <location>
        <position position="3022"/>
    </location>
</feature>
<feature type="glycosylation site" description="N-linked (GlcNAc...) asparagine" evidence="1">
    <location>
        <position position="3056"/>
    </location>
</feature>
<feature type="glycosylation site" description="N-linked (GlcNAc...) asparagine" evidence="1">
    <location>
        <position position="3105"/>
    </location>
</feature>
<feature type="glycosylation site" description="N-linked (GlcNAc...) asparagine" evidence="1">
    <location>
        <position position="3228"/>
    </location>
</feature>
<feature type="glycosylation site" description="N-linked (GlcNAc...) asparagine" evidence="1">
    <location>
        <position position="3260"/>
    </location>
</feature>
<feature type="glycosylation site" description="N-linked (GlcNAc...) asparagine" evidence="1">
    <location>
        <position position="3339"/>
    </location>
</feature>
<feature type="glycosylation site" description="N-linked (GlcNAc...) asparagine" evidence="1">
    <location>
        <position position="3379"/>
    </location>
</feature>
<feature type="glycosylation site" description="N-linked (GlcNAc...) asparagine" evidence="1">
    <location>
        <position position="3386"/>
    </location>
</feature>
<feature type="disulfide bond" evidence="2">
    <location>
        <begin position="32"/>
        <end position="58"/>
    </location>
</feature>
<feature type="disulfide bond" evidence="3">
    <location>
        <begin position="145"/>
        <end position="185"/>
    </location>
</feature>
<feature type="disulfide bond" evidence="3">
    <location>
        <begin position="171"/>
        <end position="202"/>
    </location>
</feature>
<feature type="disulfide bond" evidence="2">
    <location>
        <begin position="208"/>
        <end position="234"/>
    </location>
</feature>
<feature type="disulfide bond" evidence="3">
    <location>
        <begin position="349"/>
        <end position="389"/>
    </location>
</feature>
<feature type="disulfide bond" evidence="3">
    <location>
        <begin position="375"/>
        <end position="406"/>
    </location>
</feature>
<feature type="disulfide bond" evidence="2">
    <location>
        <begin position="411"/>
        <end position="437"/>
    </location>
</feature>
<feature type="disulfide bond" evidence="3">
    <location>
        <begin position="527"/>
        <end position="567"/>
    </location>
</feature>
<feature type="disulfide bond" evidence="3">
    <location>
        <begin position="553"/>
        <end position="580"/>
    </location>
</feature>
<feature type="disulfide bond" evidence="2">
    <location>
        <begin position="584"/>
        <end position="610"/>
    </location>
</feature>
<feature type="disulfide bond" evidence="3">
    <location>
        <begin position="697"/>
        <end position="738"/>
    </location>
</feature>
<feature type="disulfide bond" evidence="3">
    <location>
        <begin position="723"/>
        <end position="754"/>
    </location>
</feature>
<feature type="disulfide bond" evidence="2">
    <location>
        <begin position="758"/>
        <end position="784"/>
    </location>
</feature>
<feature type="disulfide bond" evidence="3">
    <location>
        <begin position="873"/>
        <end position="913"/>
    </location>
</feature>
<feature type="disulfide bond" evidence="3">
    <location>
        <begin position="899"/>
        <end position="926"/>
    </location>
</feature>
<feature type="disulfide bond" evidence="2">
    <location>
        <begin position="930"/>
        <end position="956"/>
    </location>
</feature>
<feature type="disulfide bond" evidence="3">
    <location>
        <begin position="1045"/>
        <end position="1085"/>
    </location>
</feature>
<feature type="disulfide bond" evidence="3">
    <location>
        <begin position="1071"/>
        <end position="1100"/>
    </location>
</feature>
<feature type="disulfide bond" evidence="2">
    <location>
        <begin position="1104"/>
        <end position="1130"/>
    </location>
</feature>
<feature type="disulfide bond" evidence="3">
    <location>
        <begin position="1217"/>
        <end position="1258"/>
    </location>
</feature>
<feature type="disulfide bond" evidence="3">
    <location>
        <begin position="1244"/>
        <end position="1273"/>
    </location>
</feature>
<feature type="disulfide bond" evidence="2">
    <location>
        <begin position="1277"/>
        <end position="1304"/>
    </location>
</feature>
<feature type="disulfide bond" evidence="3">
    <location>
        <begin position="1391"/>
        <end position="1431"/>
    </location>
</feature>
<feature type="disulfide bond" evidence="3">
    <location>
        <begin position="1417"/>
        <end position="1447"/>
    </location>
</feature>
<feature type="disulfide bond" evidence="2">
    <location>
        <begin position="1451"/>
        <end position="1477"/>
    </location>
</feature>
<feature type="disulfide bond" evidence="3">
    <location>
        <begin position="1564"/>
        <end position="1604"/>
    </location>
</feature>
<feature type="disulfide bond" evidence="3">
    <location>
        <begin position="1590"/>
        <end position="1621"/>
    </location>
</feature>
<feature type="disulfide bond" evidence="2">
    <location>
        <begin position="1625"/>
        <end position="1651"/>
    </location>
</feature>
<feature type="disulfide bond" evidence="3">
    <location>
        <begin position="1741"/>
        <end position="1781"/>
    </location>
</feature>
<feature type="disulfide bond" evidence="3">
    <location>
        <begin position="1767"/>
        <end position="1798"/>
    </location>
</feature>
<feature type="disulfide bond" evidence="2">
    <location>
        <begin position="1802"/>
        <end position="1828"/>
    </location>
</feature>
<feature type="disulfide bond" evidence="3">
    <location>
        <begin position="1915"/>
        <end position="1955"/>
    </location>
</feature>
<feature type="disulfide bond" evidence="3">
    <location>
        <begin position="1941"/>
        <end position="1970"/>
    </location>
</feature>
<feature type="disulfide bond" evidence="2">
    <location>
        <begin position="1974"/>
        <end position="2000"/>
    </location>
</feature>
<feature type="disulfide bond" evidence="3">
    <location>
        <begin position="2087"/>
        <end position="2127"/>
    </location>
</feature>
<feature type="disulfide bond" evidence="3">
    <location>
        <begin position="2113"/>
        <end position="2142"/>
    </location>
</feature>
<feature type="disulfide bond" evidence="2">
    <location>
        <begin position="2146"/>
        <end position="2172"/>
    </location>
</feature>
<feature type="disulfide bond" evidence="3">
    <location>
        <begin position="2258"/>
        <end position="2300"/>
    </location>
</feature>
<feature type="disulfide bond" evidence="3">
    <location>
        <begin position="2286"/>
        <end position="2315"/>
    </location>
</feature>
<feature type="disulfide bond" evidence="2">
    <location>
        <begin position="2319"/>
        <end position="2347"/>
    </location>
</feature>
<feature type="disulfide bond" evidence="3">
    <location>
        <begin position="2432"/>
        <end position="2473"/>
    </location>
</feature>
<feature type="disulfide bond" evidence="3">
    <location>
        <begin position="2459"/>
        <end position="2490"/>
    </location>
</feature>
<feature type="disulfide bond" evidence="3">
    <location>
        <begin position="2495"/>
        <end position="2537"/>
    </location>
</feature>
<feature type="disulfide bond" evidence="3">
    <location>
        <begin position="2521"/>
        <end position="2552"/>
    </location>
</feature>
<feature type="disulfide bond" evidence="3">
    <location>
        <begin position="2557"/>
        <end position="2602"/>
    </location>
</feature>
<feature type="disulfide bond" evidence="3">
    <location>
        <begin position="2588"/>
        <end position="2617"/>
    </location>
</feature>
<feature type="disulfide bond" evidence="3">
    <location>
        <begin position="2622"/>
        <end position="2662"/>
    </location>
</feature>
<feature type="disulfide bond" evidence="3">
    <location>
        <begin position="2648"/>
        <end position="2675"/>
    </location>
</feature>
<feature type="disulfide bond" evidence="3">
    <location>
        <begin position="2680"/>
        <end position="2720"/>
    </location>
</feature>
<feature type="disulfide bond" evidence="3">
    <location>
        <begin position="2706"/>
        <end position="2733"/>
    </location>
</feature>
<feature type="disulfide bond" evidence="3">
    <location>
        <begin position="2738"/>
        <end position="2778"/>
    </location>
</feature>
<feature type="disulfide bond" evidence="3">
    <location>
        <begin position="2764"/>
        <end position="2791"/>
    </location>
</feature>
<feature type="disulfide bond" evidence="3">
    <location>
        <begin position="2796"/>
        <end position="2841"/>
    </location>
</feature>
<feature type="disulfide bond" evidence="3">
    <location>
        <begin position="2827"/>
        <end position="2854"/>
    </location>
</feature>
<feature type="disulfide bond" evidence="3">
    <location>
        <begin position="2859"/>
        <end position="2899"/>
    </location>
</feature>
<feature type="disulfide bond" evidence="3">
    <location>
        <begin position="2885"/>
        <end position="2912"/>
    </location>
</feature>
<feature type="disulfide bond" evidence="3">
    <location>
        <begin position="2920"/>
        <end position="2960"/>
    </location>
</feature>
<feature type="disulfide bond" evidence="3">
    <location>
        <begin position="2946"/>
        <end position="2973"/>
    </location>
</feature>
<feature type="disulfide bond" evidence="3">
    <location>
        <begin position="2978"/>
        <end position="3019"/>
    </location>
</feature>
<feature type="disulfide bond" evidence="3">
    <location>
        <begin position="3005"/>
        <end position="3032"/>
    </location>
</feature>
<feature type="disulfide bond" evidence="3">
    <location>
        <begin position="3037"/>
        <end position="3079"/>
    </location>
</feature>
<feature type="disulfide bond" evidence="3">
    <location>
        <begin position="3063"/>
        <end position="3092"/>
    </location>
</feature>
<feature type="disulfide bond" evidence="3">
    <location>
        <begin position="3097"/>
        <end position="3137"/>
    </location>
</feature>
<feature type="disulfide bond" evidence="3">
    <location>
        <begin position="3123"/>
        <end position="3150"/>
    </location>
</feature>
<feature type="disulfide bond" evidence="3">
    <location>
        <begin position="3155"/>
        <end position="3195"/>
    </location>
</feature>
<feature type="disulfide bond" evidence="3">
    <location>
        <begin position="3181"/>
        <end position="3208"/>
    </location>
</feature>
<feature type="disulfide bond" evidence="3">
    <location>
        <begin position="3216"/>
        <end position="3257"/>
    </location>
</feature>
<feature type="disulfide bond" evidence="3">
    <location>
        <begin position="3243"/>
        <end position="3270"/>
    </location>
</feature>
<feature type="disulfide bond" evidence="3">
    <location>
        <begin position="3275"/>
        <end position="3317"/>
    </location>
</feature>
<feature type="disulfide bond" evidence="3">
    <location>
        <begin position="3302"/>
        <end position="3330"/>
    </location>
</feature>
<feature type="splice variant" id="VSP_009032" description="In isoform 4." evidence="7 8">
    <original>A</original>
    <variation>K</variation>
    <location>
        <position position="2012"/>
    </location>
</feature>
<feature type="splice variant" id="VSP_009033" description="In isoform 4." evidence="7 8">
    <location>
        <begin position="2013"/>
        <end position="3564"/>
    </location>
</feature>
<feature type="splice variant" id="VSP_009030" description="In isoform 3." evidence="9">
    <original>AYELQNCPDPPPFQNGYMINSDYSVGQSV</original>
    <variation>GGSGNIGPAFPCLDTPFQARCQGEERTFN</variation>
    <location>
        <begin position="2081"/>
        <end position="2109"/>
    </location>
</feature>
<feature type="splice variant" id="VSP_009031" description="In isoform 3." evidence="9">
    <location>
        <begin position="2110"/>
        <end position="3564"/>
    </location>
</feature>
<feature type="splice variant" id="VSP_009034" description="In isoform 2." evidence="6">
    <location>
        <begin position="2619"/>
        <end position="2676"/>
    </location>
</feature>
<feature type="splice variant" id="VSP_009035" description="In isoform 2." evidence="6">
    <location>
        <begin position="2975"/>
        <end position="3093"/>
    </location>
</feature>
<feature type="sequence variant" id="VAR_059634" description="In dbSNP:rs6995799.">
    <original>M</original>
    <variation>I</variation>
    <location>
        <position position="2040"/>
    </location>
</feature>
<feature type="sequence variant" id="VAR_076444" description="In dbSNP:rs1254099921." evidence="5">
    <original>P</original>
    <variation>A</variation>
    <location>
        <position position="2260"/>
    </location>
</feature>
<feature type="sequence variant" id="VAR_056846" description="In dbSNP:rs34079122.">
    <original>G</original>
    <variation>W</variation>
    <location>
        <position position="3311"/>
    </location>
</feature>
<feature type="sequence variant" id="VAR_059635" description="In dbSNP:rs34337712.">
    <original>Q</original>
    <variation>H</variation>
    <location>
        <position position="3369"/>
    </location>
</feature>
<feature type="sequence variant" id="VAR_059636" description="In dbSNP:rs11984691.">
    <original>S</original>
    <variation>N</variation>
    <location>
        <position position="3478"/>
    </location>
</feature>
<feature type="sequence variant" id="VAR_076445" description="In dbSNP:rs573209145." evidence="5">
    <original>Y</original>
    <variation>C</variation>
    <location>
        <position position="3539"/>
    </location>
</feature>
<feature type="sequence conflict" description="In Ref. 1; AAK73475/AAG52948." evidence="10" ref="1">
    <original>D</original>
    <variation>N</variation>
    <location>
        <position position="82"/>
    </location>
</feature>
<feature type="sequence conflict" description="In Ref. 1; AAK73475/AAG52948." evidence="10" ref="1">
    <original>DMCP</original>
    <variation>HMCL</variation>
    <location>
        <begin position="347"/>
        <end position="350"/>
    </location>
</feature>
<feature type="sequence conflict" description="In Ref. 1; AAK73475/AAG52948." evidence="10" ref="1">
    <original>F</original>
    <variation>FS</variation>
    <location>
        <position position="365"/>
    </location>
</feature>
<feature type="sequence conflict" description="In Ref. 1; AAG52948." evidence="10" ref="1">
    <original>D</original>
    <variation>N</variation>
    <location>
        <position position="643"/>
    </location>
</feature>
<feature type="sequence conflict" description="In Ref. 1; AAK73475/AAG52948." evidence="10" ref="1">
    <original>I</original>
    <variation>M</variation>
    <location>
        <position position="798"/>
    </location>
</feature>
<feature type="sequence conflict" description="In Ref. 6; AK126936." evidence="10" ref="6">
    <original>V</original>
    <variation>I</variation>
    <location>
        <position position="1461"/>
    </location>
</feature>
<feature type="sequence conflict" description="In Ref. 1; AAK73475/AAG52948." evidence="10" ref="1">
    <original>IQVISFATEQNWDSL</original>
    <variation>DPSDQFCHGAELGLPF</variation>
    <location>
        <begin position="1842"/>
        <end position="1856"/>
    </location>
</feature>
<feature type="sequence conflict" description="In Ref. 6; AK126936." evidence="10" ref="6">
    <original>L</original>
    <variation>F</variation>
    <location>
        <position position="2061"/>
    </location>
</feature>
<feature type="sequence conflict" description="In Ref. 1; AAK73475/AAG52948." evidence="10" ref="1">
    <original>T</original>
    <variation>M</variation>
    <location>
        <position position="2551"/>
    </location>
</feature>
<feature type="sequence conflict" description="In Ref. 1; AAK73475." evidence="10" ref="1">
    <original>Y</original>
    <variation>H</variation>
    <location>
        <position position="2832"/>
    </location>
</feature>
<feature type="strand" evidence="11">
    <location>
        <begin position="534"/>
        <end position="539"/>
    </location>
</feature>
<feature type="strand" evidence="11">
    <location>
        <begin position="548"/>
        <end position="552"/>
    </location>
</feature>
<feature type="strand" evidence="11">
    <location>
        <begin position="563"/>
        <end position="567"/>
    </location>
</feature>
<feature type="strand" evidence="11">
    <location>
        <begin position="569"/>
        <end position="575"/>
    </location>
</feature>
<comment type="function">
    <text>Potential suppressor of squamous cell carcinomas.</text>
</comment>
<comment type="interaction">
    <interactant intactId="EBI-766158">
        <id>Q96PZ7</id>
    </interactant>
    <interactant intactId="EBI-347161">
        <id>P84022</id>
        <label>SMAD3</label>
    </interactant>
    <organismsDiffer>false</organismsDiffer>
    <experiments>3</experiments>
</comment>
<comment type="subcellular location">
    <subcellularLocation>
        <location evidence="10">Membrane</location>
        <topology evidence="10">Single-pass type I membrane protein</topology>
    </subcellularLocation>
</comment>
<comment type="alternative products">
    <event type="alternative splicing"/>
    <isoform>
        <id>Q96PZ7-1</id>
        <name>1</name>
        <sequence type="displayed"/>
    </isoform>
    <isoform>
        <id>Q96PZ7-2</id>
        <name>2</name>
        <name>Short</name>
        <sequence type="described" ref="VSP_009034 VSP_009035"/>
    </isoform>
    <isoform>
        <id>Q96PZ7-3</id>
        <name>3</name>
        <sequence type="described" ref="VSP_009030 VSP_009031"/>
    </isoform>
    <isoform>
        <id>Q96PZ7-4</id>
        <name>4</name>
        <sequence type="described" ref="VSP_009032 VSP_009033"/>
    </isoform>
</comment>
<comment type="tissue specificity">
    <text evidence="4">Weakly expressed in most tissues, except in brain. Expressed at intermediate level in brain, including cerebellum, substantia nigra, hippocampus and fetal brain.</text>
</comment>
<comment type="miscellaneous">
    <text>CSMD1 may be a candidate for oral and oropharyngeal squamous cell carcinomas (OSCCs). PubMed:12696061 and PubMed:14506705 are however in disagreement: while PubMed:14506705 considers CSMD1 as a strong candidate for OSCCs, PubMed:12696061 thinks it is not.</text>
</comment>
<comment type="similarity">
    <text evidence="10">Belongs to the CSMD family.</text>
</comment>
<comment type="sequence caution" evidence="10">
    <conflict type="erroneous initiation">
        <sequence resource="EMBL-CDS" id="AAQ88541"/>
    </conflict>
    <text>Truncated N-terminus.</text>
</comment>
<evidence type="ECO:0000255" key="1"/>
<evidence type="ECO:0000255" key="2">
    <source>
        <dbReference type="PROSITE-ProRule" id="PRU00059"/>
    </source>
</evidence>
<evidence type="ECO:0000255" key="3">
    <source>
        <dbReference type="PROSITE-ProRule" id="PRU00302"/>
    </source>
</evidence>
<evidence type="ECO:0000269" key="4">
    <source>
    </source>
</evidence>
<evidence type="ECO:0000269" key="5">
    <source>
    </source>
</evidence>
<evidence type="ECO:0000303" key="6">
    <source>
    </source>
</evidence>
<evidence type="ECO:0000303" key="7">
    <source>
    </source>
</evidence>
<evidence type="ECO:0000303" key="8">
    <source>
    </source>
</evidence>
<evidence type="ECO:0000303" key="9">
    <source>
    </source>
</evidence>
<evidence type="ECO:0000305" key="10"/>
<evidence type="ECO:0007829" key="11">
    <source>
        <dbReference type="PDB" id="2EHF"/>
    </source>
</evidence>
<name>CSMD1_HUMAN</name>
<keyword id="KW-0002">3D-structure</keyword>
<keyword id="KW-0025">Alternative splicing</keyword>
<keyword id="KW-1015">Disulfide bond</keyword>
<keyword id="KW-0325">Glycoprotein</keyword>
<keyword id="KW-0472">Membrane</keyword>
<keyword id="KW-1267">Proteomics identification</keyword>
<keyword id="KW-1185">Reference proteome</keyword>
<keyword id="KW-0677">Repeat</keyword>
<keyword id="KW-0732">Signal</keyword>
<keyword id="KW-0768">Sushi</keyword>
<keyword id="KW-0812">Transmembrane</keyword>
<keyword id="KW-1133">Transmembrane helix</keyword>
<sequence length="3564" mass="388736">MTAWRRFQSLLLLLGLLVLCARLLTAAKGQNCGGLVQGPNGTIESPGFPHGYPNYANCTWIIITGERNRIQLSFHTFALEEDFDILSVYDGQPQQGNLKVRLSGFQLPSSIVSTGSILTLWFTTDFAVSAQGFKALYEVLPSHTCGNPGEILKGVLHGTRFNIGDKIRYSCLPGYILEGHAILTCIVSPGNGASWDFPAPFCRAEGACGGTLRGTSSSISSPHFPSEYENNADCTWTILAEPGDTIALVFTDFQLEEGYDFLEISGTEAPSIWLTGMNLPSPVISSKNWLRLHFTSDSNHRRKGFNAQFQVKKAIELKSRGVKMLPSKDGSHKNSVLSQGGVALVSDMCPDPGIPENGRRAGSDFRVGANVQFSCEDNYVLQGSKSITCQRVTETLAAWSDHRPICRARTCGSNLRGPSGVITSPNYPVQYEDNAHCVWVITTTDPDKVIKLAFEEFELERGYDTLTVGDAGKVGDTRSVLYVLTGSSVPDLIVSMSNQMWLHLQSDDSIGSPGFKAVYQEIEKGGCGDPGIPAYGKRTGSSFLHGDTLTFECPAAFELVGERVITCQQNNQWSGNKPSCVFSCFFNFTASSGIILSPNYPEEYGNNMNCVWLIISEPGSRIHLIFNDFDVEPQFDFLAVKDDGISDITVLGTFSGNEVPSQLASSGHIVRLEFQSDHSTTGRGFNITYTTFGQNECHDPGIPINGRRFGDRFLLGSSVSFHCDDGFVKTQGSESITCILQDGNVVWSSTVPRCEAPCGGHLTASSGVILPPGWPGYYKDSLHCEWIIEAKPGHSIKITFDRFQTEVNYDTLEVRDGPASSSPLIGEYHGTQAPQFLISTGNFMYLLFTTDNSRSSIGFLIHYESVTLESDSCLDPGIPVNGHRHGGDFGIRSTVTFSCDPGYTLSDDEPLVCERNHQWNHALPSCDALCGGYIQGKSGTVLSPGFPDFYPNSLNCTWTIEVSHGKGVQMIFHTFHLESSHDYLLITEDGSFSEPVARLTGSVLPHTIKAGLFGNFTAQLRFISDFSISYEGFNITFSEYDLEPCDDPGVPAFSRRIGFHFGVGDSLTFSCFLGYRLEGATKLTCLGGGRRVWSAPLPRCVAECGASVKGNEGTLLSPNFPSNYDNNHECIYKIETEAGKGIHLRTRSFQLFEGDTLKVYDGKDSSSRPLGTFTKNELLGLILNSTSNHLWLEFNTNGSDTDQGFQLTYTSFDLVKCEDPGIPNYGYRIRDEGHFTDTVVLYSCNPGYAMHGSNTLTCLSGDRRVWDKPLPSCIAECGGQIHAATSGRILSPGYPAPYDNNLHCTWIIEADPGKTISLHFIVFDTEMAHDILKVWDGPVDSDILLKEWSGSALPEDIHSTFNSLTLQFDSDFFISKSGFSIQFSTSIAATCNDPGMPQNGTRYGDSREAGDTVTFQCDPGYQLQGQAKITCVQLNNRFFWQPDPPTCIAACGGNLTGPAGVILSPNYPQPYPPGKECDWRVKVNPDFVIALIFKSFNMEPSYDFLHIYEGEDSNSPLIGSYQGSQAPERIESSGNSLFLAFRSDASVGLSGFAIEFKEKPREACFDPGNIMNGTRVGTDFKLGSTITYQCDSGYKILDPSSITCVIGADGKPSWDQVLPSCNAPCGGQYTGSEGVVLSPNYPHNYTAGQICLYSITVPKEFVVFGQFAYFQTALNDLAELFDGTHAQARLLSSLSGSHSGETLPLATSNQILLRFSAKSGASARGFHFVYQAVPRTSDTQCSSVPEPRYGRRIGSEFSAGSIVRFECNPGYLLQGSTALHCQSVPNALAQWNDTIPSCVVPCSGNFTQRRGTILSPGYPEPYGNNLNCIWKIIVTEGSGIQIQVISFATEQNWDSLEIHDGGDVTAPRLGSFSGTTVPALLNSTSNQLYLHFQSDISVAAAGFHLEYKTVGLAACQEPALPSNSIKIGDRYMVNDVLSFQCEPGYTLQGRSHISCMPGTVRRWNYPSPLCIATCGGTLSTLGGVILSPGFPGSYPNNLDCTWRISLPIGYGAHIQFLNFSTEANHDFLEIQNGPYHTSPMIGQFSGTDLPAALLSTTHETLIHFYSDHSQNRQGFKLAYQAYELQNCPDPPPFQNGYMINSDYSVGQSVSFECYPGYILIGHPVLTCQHGINRNWNYPFPRCDAPCGYNVTSQNGTIYSPGFPDEYPILKDCIWLITVPPGHGVYINFTLLQTEAVNDYIAVWDGPDQNSPQLGVFSGNTALETAYSSTNQVLLKFHSDFSNGGFFVLNFHAFQLKKCQPPPAVPQAEMLTEDDDFEIGDFVKYQCHPGYTLVGTDILTCKLSSQLQFEGSLPTCEAQCPANEVRTGSSGVILSPGYPGNYFNSQTCSWSIKVEPNYNITIFVDTFQSEKQFDALEVFDGSSGQSPLLVVLSGNHTEQSNFTSRSNQLYLRWSTDHATSKKGFKIRYAAPYCSLTHPLKNGGILNRTAGAVGSKVHYFCKPGYRMVGHSNATCRRNPLGMYQWDSLTPLCQAVSCGIPESPGNGSFTGNEFTLDSKVVYECHEGFKLESSQQATAVCQEDGLWSNKGKPPTCKPVACPSIEAQLSEHVIWRLVSGSLNEYGAQVLLSCSPGYYLEGWRLLRCQANGTWNIGDERPSCRVISCGSLSFPPNGNKIGTLTVYGATAIFTCNTGYTLVGSHVRECLANGLWSGSETRCLAGHCGSPDPIVNGHISGDGFSYRDTVVYQCNPGFRLVGTSVRICLQDHKWSGQTPVCVPITCGHPGNPAHGFTNGSEFNLNDVVNFTCNTGYLLQGVSRAQCRSNGQWSSPLPTCRVVNCSDPGFVENAIRHGQQNFPESFEYGMSILYHCKKGFYLLGSSALTCMANGLWDRSLPKCLAISCGHPGVPANAVLTGELFTYGAVVHYSCRGSESLIGNDTRVCQEDSHWSGALPHCTGNNPGFCGDPGTPAHGSRLGDDFKTKSLLRFSCEMGHQLRGSPERTCLLNGSWSGLQPVCEAVSCGNPGTPTNGMIVSSDGILFSSSVIYACWEGYKTSGLMTRHCTANGTWTGTAPDCTIISCGDPGTLANGIQFGTDFTFNKTVSYQCNPGYVMEAVTSATIRCTKDGRWNPSKPVCKAVLCPQPPPVQNGTVEGSDFRWGSSISYSCMDGYQLSHSAILSCEGRGVWKGEIPQCLPVFCGDPGIPAEGRLSGKSFTYKSEVFFQCKSPFILVGSSRRVCQADGTWSGIQPTCIDPAHNTCPDPGTPHFGIQNSSRGYEVGSTVFFRCRKGYHIQGSTTRTCLANLTWSGIQTECIPHACRQPETPAHADVRAIDLPTFGYTLVYTCHPGFFLAGGSEHRTCKADMKWTGKSPVCKSKGVREVNETVTKTPVPSDVFFVNSLWKGYYEYLGKRQPATLTVDWFNATSSKVNATFSEASPVELKLTGIYKKEEAHLLLKAFQIKGQADIFVSKFENDNWGLDGYVSSGLERGGFTFQGDIHGKDFGKFKLERQDPLNPDQDSSSHYHGTSSGSVAAAILVPFFALILSGFAFYLYKHRTRPKVQYNGYAGHENSNGQASFENPMYDTNLKPTEAKAVRFDTTLNTVCTVV</sequence>
<reference key="1">
    <citation type="journal article" date="2001" name="Genomics">
        <title>Transcript map of the 8p23 putative tumor suppressor region.</title>
        <authorList>
            <person name="Sun P.C."/>
            <person name="Uppaluri R."/>
            <person name="Schmidt A.P."/>
            <person name="Pashia M.E."/>
            <person name="Quant E.C."/>
            <person name="Sunwoo J.B."/>
            <person name="Gollin S.M."/>
            <person name="Scholnick S.B."/>
        </authorList>
    </citation>
    <scope>NUCLEOTIDE SEQUENCE [MRNA] (ISOFORMS 1 AND 2)</scope>
</reference>
<reference key="2">
    <citation type="journal article" date="2005" name="Nature">
        <title>Generation and annotation of the DNA sequences of human chromosomes 2 and 4.</title>
        <authorList>
            <person name="Hillier L.W."/>
            <person name="Graves T.A."/>
            <person name="Fulton R.S."/>
            <person name="Fulton L.A."/>
            <person name="Pepin K.H."/>
            <person name="Minx P."/>
            <person name="Wagner-McPherson C."/>
            <person name="Layman D."/>
            <person name="Wylie K."/>
            <person name="Sekhon M."/>
            <person name="Becker M.C."/>
            <person name="Fewell G.A."/>
            <person name="Delehaunty K.D."/>
            <person name="Miner T.L."/>
            <person name="Nash W.E."/>
            <person name="Kremitzki C."/>
            <person name="Oddy L."/>
            <person name="Du H."/>
            <person name="Sun H."/>
            <person name="Bradshaw-Cordum H."/>
            <person name="Ali J."/>
            <person name="Carter J."/>
            <person name="Cordes M."/>
            <person name="Harris A."/>
            <person name="Isak A."/>
            <person name="van Brunt A."/>
            <person name="Nguyen C."/>
            <person name="Du F."/>
            <person name="Courtney L."/>
            <person name="Kalicki J."/>
            <person name="Ozersky P."/>
            <person name="Abbott S."/>
            <person name="Armstrong J."/>
            <person name="Belter E.A."/>
            <person name="Caruso L."/>
            <person name="Cedroni M."/>
            <person name="Cotton M."/>
            <person name="Davidson T."/>
            <person name="Desai A."/>
            <person name="Elliott G."/>
            <person name="Erb T."/>
            <person name="Fronick C."/>
            <person name="Gaige T."/>
            <person name="Haakenson W."/>
            <person name="Haglund K."/>
            <person name="Holmes A."/>
            <person name="Harkins R."/>
            <person name="Kim K."/>
            <person name="Kruchowski S.S."/>
            <person name="Strong C.M."/>
            <person name="Grewal N."/>
            <person name="Goyea E."/>
            <person name="Hou S."/>
            <person name="Levy A."/>
            <person name="Martinka S."/>
            <person name="Mead K."/>
            <person name="McLellan M.D."/>
            <person name="Meyer R."/>
            <person name="Randall-Maher J."/>
            <person name="Tomlinson C."/>
            <person name="Dauphin-Kohlberg S."/>
            <person name="Kozlowicz-Reilly A."/>
            <person name="Shah N."/>
            <person name="Swearengen-Shahid S."/>
            <person name="Snider J."/>
            <person name="Strong J.T."/>
            <person name="Thompson J."/>
            <person name="Yoakum M."/>
            <person name="Leonard S."/>
            <person name="Pearman C."/>
            <person name="Trani L."/>
            <person name="Radionenko M."/>
            <person name="Waligorski J.E."/>
            <person name="Wang C."/>
            <person name="Rock S.M."/>
            <person name="Tin-Wollam A.-M."/>
            <person name="Maupin R."/>
            <person name="Latreille P."/>
            <person name="Wendl M.C."/>
            <person name="Yang S.-P."/>
            <person name="Pohl C."/>
            <person name="Wallis J.W."/>
            <person name="Spieth J."/>
            <person name="Bieri T.A."/>
            <person name="Berkowicz N."/>
            <person name="Nelson J.O."/>
            <person name="Osborne J."/>
            <person name="Ding L."/>
            <person name="Meyer R."/>
            <person name="Sabo A."/>
            <person name="Shotland Y."/>
            <person name="Sinha P."/>
            <person name="Wohldmann P.E."/>
            <person name="Cook L.L."/>
            <person name="Hickenbotham M.T."/>
            <person name="Eldred J."/>
            <person name="Williams D."/>
            <person name="Jones T.A."/>
            <person name="She X."/>
            <person name="Ciccarelli F.D."/>
            <person name="Izaurralde E."/>
            <person name="Taylor J."/>
            <person name="Schmutz J."/>
            <person name="Myers R.M."/>
            <person name="Cox D.R."/>
            <person name="Huang X."/>
            <person name="McPherson J.D."/>
            <person name="Mardis E.R."/>
            <person name="Clifton S.W."/>
            <person name="Warren W.C."/>
            <person name="Chinwalla A.T."/>
            <person name="Eddy S.R."/>
            <person name="Marra M.A."/>
            <person name="Ovcharenko I."/>
            <person name="Furey T.S."/>
            <person name="Miller W."/>
            <person name="Eichler E.E."/>
            <person name="Bork P."/>
            <person name="Suyama M."/>
            <person name="Torrents D."/>
            <person name="Waterston R.H."/>
            <person name="Wilson R.K."/>
        </authorList>
    </citation>
    <scope>NUCLEOTIDE SEQUENCE [LARGE SCALE GENOMIC DNA]</scope>
</reference>
<reference key="3">
    <citation type="journal article" date="2006" name="Genetics">
        <title>Scan of human genome reveals no new loci under ancient balancing selection.</title>
        <authorList>
            <person name="Bubb K.L."/>
            <person name="Bovee D."/>
            <person name="Buckley D."/>
            <person name="Haugen E."/>
            <person name="Kibukawa M."/>
            <person name="Paddock M."/>
            <person name="Palmieri A."/>
            <person name="Subramanian S."/>
            <person name="Zhou Y."/>
            <person name="Kaul R."/>
            <person name="Green P."/>
            <person name="Olson M.V."/>
        </authorList>
    </citation>
    <scope>NUCLEOTIDE SEQUENCE [GENOMIC DNA] OF 140-203</scope>
</reference>
<reference key="4">
    <citation type="journal article" date="2003" name="Genome Res.">
        <title>The secreted protein discovery initiative (SPDI), a large-scale effort to identify novel human secreted and transmembrane proteins: a bioinformatics assessment.</title>
        <authorList>
            <person name="Clark H.F."/>
            <person name="Gurney A.L."/>
            <person name="Abaya E."/>
            <person name="Baker K."/>
            <person name="Baldwin D.T."/>
            <person name="Brush J."/>
            <person name="Chen J."/>
            <person name="Chow B."/>
            <person name="Chui C."/>
            <person name="Crowley C."/>
            <person name="Currell B."/>
            <person name="Deuel B."/>
            <person name="Dowd P."/>
            <person name="Eaton D."/>
            <person name="Foster J.S."/>
            <person name="Grimaldi C."/>
            <person name="Gu Q."/>
            <person name="Hass P.E."/>
            <person name="Heldens S."/>
            <person name="Huang A."/>
            <person name="Kim H.S."/>
            <person name="Klimowski L."/>
            <person name="Jin Y."/>
            <person name="Johnson S."/>
            <person name="Lee J."/>
            <person name="Lewis L."/>
            <person name="Liao D."/>
            <person name="Mark M.R."/>
            <person name="Robbie E."/>
            <person name="Sanchez C."/>
            <person name="Schoenfeld J."/>
            <person name="Seshagiri S."/>
            <person name="Simmons L."/>
            <person name="Singh J."/>
            <person name="Smith V."/>
            <person name="Stinson J."/>
            <person name="Vagts A."/>
            <person name="Vandlen R.L."/>
            <person name="Watanabe C."/>
            <person name="Wieand D."/>
            <person name="Woods K."/>
            <person name="Xie M.-H."/>
            <person name="Yansura D.G."/>
            <person name="Yi S."/>
            <person name="Yu G."/>
            <person name="Yuan J."/>
            <person name="Zhang M."/>
            <person name="Zhang Z."/>
            <person name="Goddard A.D."/>
            <person name="Wood W.I."/>
            <person name="Godowski P.J."/>
            <person name="Gray A.M."/>
        </authorList>
    </citation>
    <scope>NUCLEOTIDE SEQUENCE [LARGE SCALE MRNA] OF 824-3564 (ISOFORM 4)</scope>
</reference>
<reference key="5">
    <citation type="journal article" date="2001" name="DNA Res.">
        <title>Prediction of the coding sequences of unidentified human genes. XXI. The complete sequences of 60 new cDNA clones from brain which code for large proteins.</title>
        <authorList>
            <person name="Nagase T."/>
            <person name="Kikuno R."/>
            <person name="Ohara O."/>
        </authorList>
    </citation>
    <scope>NUCLEOTIDE SEQUENCE [LARGE SCALE MRNA] OF 965-2012 (ISOFORM 4)</scope>
    <scope>TISSUE SPECIFICITY</scope>
    <source>
        <tissue>Brain</tissue>
    </source>
</reference>
<reference key="6">
    <citation type="journal article" date="2004" name="Nat. Genet.">
        <title>Complete sequencing and characterization of 21,243 full-length human cDNAs.</title>
        <authorList>
            <person name="Ota T."/>
            <person name="Suzuki Y."/>
            <person name="Nishikawa T."/>
            <person name="Otsuki T."/>
            <person name="Sugiyama T."/>
            <person name="Irie R."/>
            <person name="Wakamatsu A."/>
            <person name="Hayashi K."/>
            <person name="Sato H."/>
            <person name="Nagai K."/>
            <person name="Kimura K."/>
            <person name="Makita H."/>
            <person name="Sekine M."/>
            <person name="Obayashi M."/>
            <person name="Nishi T."/>
            <person name="Shibahara T."/>
            <person name="Tanaka T."/>
            <person name="Ishii S."/>
            <person name="Yamamoto J."/>
            <person name="Saito K."/>
            <person name="Kawai Y."/>
            <person name="Isono Y."/>
            <person name="Nakamura Y."/>
            <person name="Nagahari K."/>
            <person name="Murakami K."/>
            <person name="Yasuda T."/>
            <person name="Iwayanagi T."/>
            <person name="Wagatsuma M."/>
            <person name="Shiratori A."/>
            <person name="Sudo H."/>
            <person name="Hosoiri T."/>
            <person name="Kaku Y."/>
            <person name="Kodaira H."/>
            <person name="Kondo H."/>
            <person name="Sugawara M."/>
            <person name="Takahashi M."/>
            <person name="Kanda K."/>
            <person name="Yokoi T."/>
            <person name="Furuya T."/>
            <person name="Kikkawa E."/>
            <person name="Omura Y."/>
            <person name="Abe K."/>
            <person name="Kamihara K."/>
            <person name="Katsuta N."/>
            <person name="Sato K."/>
            <person name="Tanikawa M."/>
            <person name="Yamazaki M."/>
            <person name="Ninomiya K."/>
            <person name="Ishibashi T."/>
            <person name="Yamashita H."/>
            <person name="Murakawa K."/>
            <person name="Fujimori K."/>
            <person name="Tanai H."/>
            <person name="Kimata M."/>
            <person name="Watanabe M."/>
            <person name="Hiraoka S."/>
            <person name="Chiba Y."/>
            <person name="Ishida S."/>
            <person name="Ono Y."/>
            <person name="Takiguchi S."/>
            <person name="Watanabe S."/>
            <person name="Yosida M."/>
            <person name="Hotuta T."/>
            <person name="Kusano J."/>
            <person name="Kanehori K."/>
            <person name="Takahashi-Fujii A."/>
            <person name="Hara H."/>
            <person name="Tanase T.-O."/>
            <person name="Nomura Y."/>
            <person name="Togiya S."/>
            <person name="Komai F."/>
            <person name="Hara R."/>
            <person name="Takeuchi K."/>
            <person name="Arita M."/>
            <person name="Imose N."/>
            <person name="Musashino K."/>
            <person name="Yuuki H."/>
            <person name="Oshima A."/>
            <person name="Sasaki N."/>
            <person name="Aotsuka S."/>
            <person name="Yoshikawa Y."/>
            <person name="Matsunawa H."/>
            <person name="Ichihara T."/>
            <person name="Shiohata N."/>
            <person name="Sano S."/>
            <person name="Moriya S."/>
            <person name="Momiyama H."/>
            <person name="Satoh N."/>
            <person name="Takami S."/>
            <person name="Terashima Y."/>
            <person name="Suzuki O."/>
            <person name="Nakagawa S."/>
            <person name="Senoh A."/>
            <person name="Mizoguchi H."/>
            <person name="Goto Y."/>
            <person name="Shimizu F."/>
            <person name="Wakebe H."/>
            <person name="Hishigaki H."/>
            <person name="Watanabe T."/>
            <person name="Sugiyama A."/>
            <person name="Takemoto M."/>
            <person name="Kawakami B."/>
            <person name="Yamazaki M."/>
            <person name="Watanabe K."/>
            <person name="Kumagai A."/>
            <person name="Itakura S."/>
            <person name="Fukuzumi Y."/>
            <person name="Fujimori Y."/>
            <person name="Komiyama M."/>
            <person name="Tashiro H."/>
            <person name="Tanigami A."/>
            <person name="Fujiwara T."/>
            <person name="Ono T."/>
            <person name="Yamada K."/>
            <person name="Fujii Y."/>
            <person name="Ozaki K."/>
            <person name="Hirao M."/>
            <person name="Ohmori Y."/>
            <person name="Kawabata A."/>
            <person name="Hikiji T."/>
            <person name="Kobatake N."/>
            <person name="Inagaki H."/>
            <person name="Ikema Y."/>
            <person name="Okamoto S."/>
            <person name="Okitani R."/>
            <person name="Kawakami T."/>
            <person name="Noguchi S."/>
            <person name="Itoh T."/>
            <person name="Shigeta K."/>
            <person name="Senba T."/>
            <person name="Matsumura K."/>
            <person name="Nakajima Y."/>
            <person name="Mizuno T."/>
            <person name="Morinaga M."/>
            <person name="Sasaki M."/>
            <person name="Togashi T."/>
            <person name="Oyama M."/>
            <person name="Hata H."/>
            <person name="Watanabe M."/>
            <person name="Komatsu T."/>
            <person name="Mizushima-Sugano J."/>
            <person name="Satoh T."/>
            <person name="Shirai Y."/>
            <person name="Takahashi Y."/>
            <person name="Nakagawa K."/>
            <person name="Okumura K."/>
            <person name="Nagase T."/>
            <person name="Nomura N."/>
            <person name="Kikuchi H."/>
            <person name="Masuho Y."/>
            <person name="Yamashita R."/>
            <person name="Nakai K."/>
            <person name="Yada T."/>
            <person name="Nakamura Y."/>
            <person name="Ohara O."/>
            <person name="Isogai T."/>
            <person name="Sugano S."/>
        </authorList>
    </citation>
    <scope>NUCLEOTIDE SEQUENCE [LARGE SCALE MRNA] OF 1318-3564 (ISOFORM 3)</scope>
    <source>
        <tissue>Brain</tissue>
    </source>
</reference>
<reference key="7">
    <citation type="journal article" date="2003" name="Genes Chromosomes Cancer">
        <title>The presence of multiple regions of homozygous deletion at the CSMD1 locus in oral squamous cell carcinoma question the role of CSMD1 in head and neck carcinogenesis.</title>
        <authorList>
            <person name="Toomes C."/>
            <person name="Jackson A."/>
            <person name="Maguire K."/>
            <person name="Wood J."/>
            <person name="Gollin S."/>
            <person name="Ishwad C."/>
            <person name="Paterson I."/>
            <person name="Prime S."/>
            <person name="Parkinson K."/>
            <person name="Bell S."/>
            <person name="Woods G."/>
            <person name="Markham A."/>
            <person name="Oliver R."/>
            <person name="Woodward R."/>
            <person name="Sloan P."/>
            <person name="Dixon M."/>
            <person name="Read A."/>
            <person name="Thakker N."/>
        </authorList>
    </citation>
    <scope>CANDIDATE FOR OSCCS</scope>
</reference>
<reference key="8">
    <citation type="journal article" date="2003" name="Genes Chromosomes Cancer">
        <title>The role of CSMD1 in head and neck carcinogenesis.</title>
        <authorList>
            <person name="Scholnick S.B."/>
            <person name="Richter T.M."/>
        </authorList>
    </citation>
    <scope>CANDIDATE FOR OSCCS</scope>
</reference>
<reference key="9">
    <citation type="submission" date="2007-09" db="PDB data bank">
        <title>Solution structure of the third sushi domain from human CUB and sushi domain-containing protein 1.</title>
        <authorList>
            <consortium name="RIKEN structural genomics initiative (RSGI)"/>
        </authorList>
    </citation>
    <scope>STRUCTURE BY NMR OF 521-580</scope>
</reference>
<reference key="10">
    <citation type="journal article" date="2016" name="J. Med. Genet.">
        <title>Homozygous missense mutation in the LMAN2L gene segregates with intellectual disability in a large consanguineous Pakistani family.</title>
        <authorList>
            <person name="Rafiullah R."/>
            <person name="Aslamkhan M."/>
            <person name="Paramasivam N."/>
            <person name="Thiel C."/>
            <person name="Mustafa G."/>
            <person name="Wiemann S."/>
            <person name="Schlesner M."/>
            <person name="Wade R.C."/>
            <person name="Rappold G.A."/>
            <person name="Berkel S."/>
        </authorList>
    </citation>
    <scope>VARIANTS ALA-2260 AND CYS-3539</scope>
</reference>
<dbReference type="EMBL" id="AF333704">
    <property type="protein sequence ID" value="AAK73475.2"/>
    <property type="molecule type" value="mRNA"/>
</dbReference>
<dbReference type="EMBL" id="AC021523">
    <property type="status" value="NOT_ANNOTATED_CDS"/>
    <property type="molecule type" value="Genomic_DNA"/>
</dbReference>
<dbReference type="EMBL" id="AC023296">
    <property type="status" value="NOT_ANNOTATED_CDS"/>
    <property type="molecule type" value="Genomic_DNA"/>
</dbReference>
<dbReference type="EMBL" id="AC087692">
    <property type="status" value="NOT_ANNOTATED_CDS"/>
    <property type="molecule type" value="Genomic_DNA"/>
</dbReference>
<dbReference type="EMBL" id="AC026991">
    <property type="status" value="NOT_ANNOTATED_CDS"/>
    <property type="molecule type" value="Genomic_DNA"/>
</dbReference>
<dbReference type="EMBL" id="AC135324">
    <property type="status" value="NOT_ANNOTATED_CDS"/>
    <property type="molecule type" value="Genomic_DNA"/>
</dbReference>
<dbReference type="EMBL" id="AY017307">
    <property type="protein sequence ID" value="AAG52948.1"/>
    <property type="molecule type" value="mRNA"/>
</dbReference>
<dbReference type="EMBL" id="DQ384438">
    <property type="protein sequence ID" value="ABD48881.1"/>
    <property type="molecule type" value="Genomic_DNA"/>
</dbReference>
<dbReference type="EMBL" id="DQ384439">
    <property type="protein sequence ID" value="ABD48882.1"/>
    <property type="molecule type" value="Genomic_DNA"/>
</dbReference>
<dbReference type="EMBL" id="DQ384440">
    <property type="protein sequence ID" value="ABD48883.1"/>
    <property type="molecule type" value="Genomic_DNA"/>
</dbReference>
<dbReference type="EMBL" id="DQ384441">
    <property type="protein sequence ID" value="ABD48884.1"/>
    <property type="molecule type" value="Genomic_DNA"/>
</dbReference>
<dbReference type="EMBL" id="DQ384442">
    <property type="protein sequence ID" value="ABD48885.1"/>
    <property type="molecule type" value="Genomic_DNA"/>
</dbReference>
<dbReference type="EMBL" id="KF458667">
    <property type="status" value="NOT_ANNOTATED_CDS"/>
    <property type="molecule type" value="Genomic_DNA"/>
</dbReference>
<dbReference type="EMBL" id="KF458665">
    <property type="status" value="NOT_ANNOTATED_CDS"/>
    <property type="molecule type" value="Genomic_DNA"/>
</dbReference>
<dbReference type="EMBL" id="KF458666">
    <property type="status" value="NOT_ANNOTATED_CDS"/>
    <property type="molecule type" value="Genomic_DNA"/>
</dbReference>
<dbReference type="EMBL" id="AY358174">
    <property type="protein sequence ID" value="AAQ88541.1"/>
    <property type="status" value="ALT_INIT"/>
    <property type="molecule type" value="mRNA"/>
</dbReference>
<dbReference type="EMBL" id="AB067477">
    <property type="protein sequence ID" value="BAB67783.1"/>
    <property type="molecule type" value="mRNA"/>
</dbReference>
<dbReference type="EMBL" id="AK126936">
    <property type="status" value="NOT_ANNOTATED_CDS"/>
    <property type="molecule type" value="mRNA"/>
</dbReference>
<dbReference type="CCDS" id="CCDS55189.1">
    <molecule id="Q96PZ7-1"/>
</dbReference>
<dbReference type="RefSeq" id="NP_150094.5">
    <molecule id="Q96PZ7-1"/>
    <property type="nucleotide sequence ID" value="NM_033225.5"/>
</dbReference>
<dbReference type="PDB" id="2EHF">
    <property type="method" value="NMR"/>
    <property type="chains" value="A=521-580"/>
</dbReference>
<dbReference type="PDBsum" id="2EHF"/>
<dbReference type="SMR" id="Q96PZ7"/>
<dbReference type="BioGRID" id="122185">
    <property type="interactions" value="7"/>
</dbReference>
<dbReference type="FunCoup" id="Q96PZ7">
    <property type="interactions" value="204"/>
</dbReference>
<dbReference type="IntAct" id="Q96PZ7">
    <property type="interactions" value="4"/>
</dbReference>
<dbReference type="MINT" id="Q96PZ7"/>
<dbReference type="STRING" id="9606.ENSP00000489225"/>
<dbReference type="GlyCosmos" id="Q96PZ7">
    <property type="glycosylation" value="40 sites, No reported glycans"/>
</dbReference>
<dbReference type="GlyGen" id="Q96PZ7">
    <property type="glycosylation" value="41 sites"/>
</dbReference>
<dbReference type="iPTMnet" id="Q96PZ7"/>
<dbReference type="PhosphoSitePlus" id="Q96PZ7"/>
<dbReference type="BioMuta" id="CSMD1"/>
<dbReference type="DMDM" id="38604975"/>
<dbReference type="MassIVE" id="Q96PZ7"/>
<dbReference type="PaxDb" id="9606-ENSP00000430733"/>
<dbReference type="PeptideAtlas" id="Q96PZ7"/>
<dbReference type="ProteomicsDB" id="77795">
    <molecule id="Q96PZ7-1"/>
</dbReference>
<dbReference type="ProteomicsDB" id="77796">
    <molecule id="Q96PZ7-2"/>
</dbReference>
<dbReference type="ProteomicsDB" id="77797">
    <molecule id="Q96PZ7-3"/>
</dbReference>
<dbReference type="ProteomicsDB" id="77798">
    <molecule id="Q96PZ7-4"/>
</dbReference>
<dbReference type="Antibodypedia" id="52810">
    <property type="antibodies" value="87 antibodies from 22 providers"/>
</dbReference>
<dbReference type="DNASU" id="64478"/>
<dbReference type="Ensembl" id="ENST00000635120.2">
    <molecule id="Q96PZ7-1"/>
    <property type="protein sequence ID" value="ENSP00000489225.1"/>
    <property type="gene ID" value="ENSG00000183117.20"/>
</dbReference>
<dbReference type="GeneID" id="64478"/>
<dbReference type="KEGG" id="hsa:64478"/>
<dbReference type="MANE-Select" id="ENST00000635120.2">
    <property type="protein sequence ID" value="ENSP00000489225.1"/>
    <property type="RefSeq nucleotide sequence ID" value="NM_033225.6"/>
    <property type="RefSeq protein sequence ID" value="NP_150094.5"/>
</dbReference>
<dbReference type="AGR" id="HGNC:14026"/>
<dbReference type="CTD" id="64478"/>
<dbReference type="DisGeNET" id="64478"/>
<dbReference type="GeneCards" id="CSMD1"/>
<dbReference type="HGNC" id="HGNC:14026">
    <property type="gene designation" value="CSMD1"/>
</dbReference>
<dbReference type="HPA" id="ENSG00000183117">
    <property type="expression patterns" value="Group enriched (brain, retina, testis)"/>
</dbReference>
<dbReference type="MalaCards" id="CSMD1"/>
<dbReference type="MIM" id="608397">
    <property type="type" value="gene"/>
</dbReference>
<dbReference type="neXtProt" id="NX_Q96PZ7"/>
<dbReference type="OpenTargets" id="ENSG00000183117"/>
<dbReference type="PharmGKB" id="PA26947"/>
<dbReference type="VEuPathDB" id="HostDB:ENSG00000183117"/>
<dbReference type="eggNOG" id="KOG4297">
    <property type="taxonomic scope" value="Eukaryota"/>
</dbReference>
<dbReference type="GeneTree" id="ENSGT00940000155701"/>
<dbReference type="InParanoid" id="Q96PZ7"/>
<dbReference type="OrthoDB" id="5804959at2759"/>
<dbReference type="PAN-GO" id="Q96PZ7">
    <property type="GO annotations" value="0 GO annotations based on evolutionary models"/>
</dbReference>
<dbReference type="PhylomeDB" id="Q96PZ7"/>
<dbReference type="PathwayCommons" id="Q96PZ7"/>
<dbReference type="SignaLink" id="Q96PZ7"/>
<dbReference type="SIGNOR" id="Q96PZ7"/>
<dbReference type="BioGRID-ORCS" id="64478">
    <property type="hits" value="9 hits in 1153 CRISPR screens"/>
</dbReference>
<dbReference type="ChiTaRS" id="CSMD1">
    <property type="organism name" value="human"/>
</dbReference>
<dbReference type="EvolutionaryTrace" id="Q96PZ7"/>
<dbReference type="GeneWiki" id="CSMD1"/>
<dbReference type="GenomeRNAi" id="64478"/>
<dbReference type="Pharos" id="Q96PZ7">
    <property type="development level" value="Tbio"/>
</dbReference>
<dbReference type="PRO" id="PR:Q96PZ7"/>
<dbReference type="Proteomes" id="UP000005640">
    <property type="component" value="Chromosome 8"/>
</dbReference>
<dbReference type="RNAct" id="Q96PZ7">
    <property type="molecule type" value="protein"/>
</dbReference>
<dbReference type="Bgee" id="ENSG00000183117">
    <property type="expression patterns" value="Expressed in Brodmann (1909) area 23 and 144 other cell types or tissues"/>
</dbReference>
<dbReference type="ExpressionAtlas" id="Q96PZ7">
    <property type="expression patterns" value="baseline and differential"/>
</dbReference>
<dbReference type="GO" id="GO:0016020">
    <property type="term" value="C:membrane"/>
    <property type="evidence" value="ECO:0007669"/>
    <property type="project" value="UniProtKB-SubCell"/>
</dbReference>
<dbReference type="GO" id="GO:1990708">
    <property type="term" value="P:conditioned place preference"/>
    <property type="evidence" value="ECO:0007669"/>
    <property type="project" value="Ensembl"/>
</dbReference>
<dbReference type="GO" id="GO:0008585">
    <property type="term" value="P:female gonad development"/>
    <property type="evidence" value="ECO:0007669"/>
    <property type="project" value="Ensembl"/>
</dbReference>
<dbReference type="GO" id="GO:0010467">
    <property type="term" value="P:gene expression"/>
    <property type="evidence" value="ECO:0007669"/>
    <property type="project" value="Ensembl"/>
</dbReference>
<dbReference type="GO" id="GO:0042593">
    <property type="term" value="P:glucose homeostasis"/>
    <property type="evidence" value="ECO:0007669"/>
    <property type="project" value="Ensembl"/>
</dbReference>
<dbReference type="GO" id="GO:0008584">
    <property type="term" value="P:male gonad development"/>
    <property type="evidence" value="ECO:0007669"/>
    <property type="project" value="Ensembl"/>
</dbReference>
<dbReference type="GO" id="GO:0060745">
    <property type="term" value="P:mammary gland branching involved in pregnancy"/>
    <property type="evidence" value="ECO:0007669"/>
    <property type="project" value="Ensembl"/>
</dbReference>
<dbReference type="GO" id="GO:0007613">
    <property type="term" value="P:memory"/>
    <property type="evidence" value="ECO:0007669"/>
    <property type="project" value="Ensembl"/>
</dbReference>
<dbReference type="GO" id="GO:0035846">
    <property type="term" value="P:oviduct epithelium development"/>
    <property type="evidence" value="ECO:0007669"/>
    <property type="project" value="Ensembl"/>
</dbReference>
<dbReference type="GO" id="GO:0001964">
    <property type="term" value="P:startle response"/>
    <property type="evidence" value="ECO:0007669"/>
    <property type="project" value="Ensembl"/>
</dbReference>
<dbReference type="CDD" id="cd00033">
    <property type="entry name" value="CCP"/>
    <property type="match status" value="28"/>
</dbReference>
<dbReference type="CDD" id="cd00041">
    <property type="entry name" value="CUB"/>
    <property type="match status" value="14"/>
</dbReference>
<dbReference type="FunFam" id="2.10.70.10:FF:000011">
    <property type="entry name" value="CUB and sushi domain-containing protein 3 isoform A"/>
    <property type="match status" value="5"/>
</dbReference>
<dbReference type="FunFam" id="2.60.120.290:FF:000001">
    <property type="entry name" value="CUB and sushi domain-containing protein 3 isoform X1"/>
    <property type="match status" value="13"/>
</dbReference>
<dbReference type="FunFam" id="2.10.70.10:FF:000002">
    <property type="entry name" value="CUB and Sushi multiple domains 3"/>
    <property type="match status" value="9"/>
</dbReference>
<dbReference type="FunFam" id="2.10.70.10:FF:000047">
    <property type="entry name" value="CUB and Sushi multiple domains 3"/>
    <property type="match status" value="1"/>
</dbReference>
<dbReference type="Gene3D" id="2.10.70.10">
    <property type="entry name" value="Complement Module, domain 1"/>
    <property type="match status" value="28"/>
</dbReference>
<dbReference type="Gene3D" id="2.60.120.290">
    <property type="entry name" value="Spermadhesin, CUB domain"/>
    <property type="match status" value="14"/>
</dbReference>
<dbReference type="InterPro" id="IPR000859">
    <property type="entry name" value="CUB_dom"/>
</dbReference>
<dbReference type="InterPro" id="IPR051277">
    <property type="entry name" value="SEZ6_CSMD_C4BPB_Regulators"/>
</dbReference>
<dbReference type="InterPro" id="IPR035914">
    <property type="entry name" value="Sperma_CUB_dom_sf"/>
</dbReference>
<dbReference type="InterPro" id="IPR035976">
    <property type="entry name" value="Sushi/SCR/CCP_sf"/>
</dbReference>
<dbReference type="InterPro" id="IPR000436">
    <property type="entry name" value="Sushi_SCR_CCP_dom"/>
</dbReference>
<dbReference type="PANTHER" id="PTHR45656">
    <property type="entry name" value="PROTEIN CBR-CLEC-78"/>
    <property type="match status" value="1"/>
</dbReference>
<dbReference type="PANTHER" id="PTHR45656:SF4">
    <property type="entry name" value="PROTEIN CBR-CLEC-78"/>
    <property type="match status" value="1"/>
</dbReference>
<dbReference type="Pfam" id="PF00431">
    <property type="entry name" value="CUB"/>
    <property type="match status" value="14"/>
</dbReference>
<dbReference type="Pfam" id="PF00084">
    <property type="entry name" value="Sushi"/>
    <property type="match status" value="28"/>
</dbReference>
<dbReference type="SMART" id="SM00032">
    <property type="entry name" value="CCP"/>
    <property type="match status" value="28"/>
</dbReference>
<dbReference type="SMART" id="SM00042">
    <property type="entry name" value="CUB"/>
    <property type="match status" value="14"/>
</dbReference>
<dbReference type="SUPFAM" id="SSF57535">
    <property type="entry name" value="Complement control module/SCR domain"/>
    <property type="match status" value="28"/>
</dbReference>
<dbReference type="SUPFAM" id="SSF49854">
    <property type="entry name" value="Spermadhesin, CUB domain"/>
    <property type="match status" value="14"/>
</dbReference>
<dbReference type="PROSITE" id="PS01180">
    <property type="entry name" value="CUB"/>
    <property type="match status" value="14"/>
</dbReference>
<dbReference type="PROSITE" id="PS50923">
    <property type="entry name" value="SUSHI"/>
    <property type="match status" value="28"/>
</dbReference>
<protein>
    <recommendedName>
        <fullName>CUB and sushi domain-containing protein 1</fullName>
    </recommendedName>
    <alternativeName>
        <fullName>CUB and sushi multiple domains protein 1</fullName>
    </alternativeName>
</protein>
<accession>Q96PZ7</accession>
<accession>A0A0U1RQY1</accession>
<accession>Q0H0J5</accession>
<accession>Q96QU9</accession>
<accession>Q96RM4</accession>
<organism>
    <name type="scientific">Homo sapiens</name>
    <name type="common">Human</name>
    <dbReference type="NCBI Taxonomy" id="9606"/>
    <lineage>
        <taxon>Eukaryota</taxon>
        <taxon>Metazoa</taxon>
        <taxon>Chordata</taxon>
        <taxon>Craniata</taxon>
        <taxon>Vertebrata</taxon>
        <taxon>Euteleostomi</taxon>
        <taxon>Mammalia</taxon>
        <taxon>Eutheria</taxon>
        <taxon>Euarchontoglires</taxon>
        <taxon>Primates</taxon>
        <taxon>Haplorrhini</taxon>
        <taxon>Catarrhini</taxon>
        <taxon>Hominidae</taxon>
        <taxon>Homo</taxon>
    </lineage>
</organism>
<proteinExistence type="evidence at protein level"/>
<gene>
    <name type="primary">CSMD1</name>
    <name type="synonym">KIAA1890</name>
    <name type="ORF">UNQ5952/PRO19863</name>
</gene>